<evidence type="ECO:0000255" key="1">
    <source>
        <dbReference type="HAMAP-Rule" id="MF_00472"/>
    </source>
</evidence>
<dbReference type="EC" id="2.1.1.222" evidence="1"/>
<dbReference type="EC" id="2.1.1.64" evidence="1"/>
<dbReference type="EMBL" id="CP000438">
    <property type="protein sequence ID" value="ABJ12396.1"/>
    <property type="molecule type" value="Genomic_DNA"/>
</dbReference>
<dbReference type="RefSeq" id="WP_003091451.1">
    <property type="nucleotide sequence ID" value="NZ_CP034244.1"/>
</dbReference>
<dbReference type="SMR" id="Q02PX7"/>
<dbReference type="KEGG" id="pau:PA14_23220"/>
<dbReference type="PseudoCAP" id="PA14_23220"/>
<dbReference type="HOGENOM" id="CLU_042432_5_0_6"/>
<dbReference type="BioCyc" id="PAER208963:G1G74-1933-MONOMER"/>
<dbReference type="UniPathway" id="UPA00232"/>
<dbReference type="Proteomes" id="UP000000653">
    <property type="component" value="Chromosome"/>
</dbReference>
<dbReference type="GO" id="GO:0102208">
    <property type="term" value="F:2-polyprenyl-6-hydroxyphenol methylase activity"/>
    <property type="evidence" value="ECO:0007669"/>
    <property type="project" value="UniProtKB-EC"/>
</dbReference>
<dbReference type="GO" id="GO:0061542">
    <property type="term" value="F:3-demethylubiquinol 3-O-methyltransferase activity"/>
    <property type="evidence" value="ECO:0007669"/>
    <property type="project" value="UniProtKB-UniRule"/>
</dbReference>
<dbReference type="GO" id="GO:0010420">
    <property type="term" value="F:polyprenyldihydroxybenzoate methyltransferase activity"/>
    <property type="evidence" value="ECO:0007669"/>
    <property type="project" value="InterPro"/>
</dbReference>
<dbReference type="GO" id="GO:0032259">
    <property type="term" value="P:methylation"/>
    <property type="evidence" value="ECO:0007669"/>
    <property type="project" value="UniProtKB-KW"/>
</dbReference>
<dbReference type="CDD" id="cd02440">
    <property type="entry name" value="AdoMet_MTases"/>
    <property type="match status" value="1"/>
</dbReference>
<dbReference type="FunFam" id="3.40.50.150:FF:000028">
    <property type="entry name" value="Ubiquinone biosynthesis O-methyltransferase"/>
    <property type="match status" value="1"/>
</dbReference>
<dbReference type="Gene3D" id="3.40.50.150">
    <property type="entry name" value="Vaccinia Virus protein VP39"/>
    <property type="match status" value="1"/>
</dbReference>
<dbReference type="HAMAP" id="MF_00472">
    <property type="entry name" value="UbiG"/>
    <property type="match status" value="1"/>
</dbReference>
<dbReference type="InterPro" id="IPR029063">
    <property type="entry name" value="SAM-dependent_MTases_sf"/>
</dbReference>
<dbReference type="InterPro" id="IPR010233">
    <property type="entry name" value="UbiG_MeTrfase"/>
</dbReference>
<dbReference type="NCBIfam" id="TIGR01983">
    <property type="entry name" value="UbiG"/>
    <property type="match status" value="1"/>
</dbReference>
<dbReference type="PANTHER" id="PTHR43464">
    <property type="entry name" value="METHYLTRANSFERASE"/>
    <property type="match status" value="1"/>
</dbReference>
<dbReference type="PANTHER" id="PTHR43464:SF19">
    <property type="entry name" value="UBIQUINONE BIOSYNTHESIS O-METHYLTRANSFERASE, MITOCHONDRIAL"/>
    <property type="match status" value="1"/>
</dbReference>
<dbReference type="Pfam" id="PF13489">
    <property type="entry name" value="Methyltransf_23"/>
    <property type="match status" value="1"/>
</dbReference>
<dbReference type="SUPFAM" id="SSF53335">
    <property type="entry name" value="S-adenosyl-L-methionine-dependent methyltransferases"/>
    <property type="match status" value="1"/>
</dbReference>
<proteinExistence type="inferred from homology"/>
<keyword id="KW-0489">Methyltransferase</keyword>
<keyword id="KW-0949">S-adenosyl-L-methionine</keyword>
<keyword id="KW-0808">Transferase</keyword>
<keyword id="KW-0831">Ubiquinone biosynthesis</keyword>
<feature type="chain" id="PRO_1000013907" description="Ubiquinone biosynthesis O-methyltransferase">
    <location>
        <begin position="1"/>
        <end position="232"/>
    </location>
</feature>
<feature type="binding site" evidence="1">
    <location>
        <position position="36"/>
    </location>
    <ligand>
        <name>S-adenosyl-L-methionine</name>
        <dbReference type="ChEBI" id="CHEBI:59789"/>
    </ligand>
</feature>
<feature type="binding site" evidence="1">
    <location>
        <position position="55"/>
    </location>
    <ligand>
        <name>S-adenosyl-L-methionine</name>
        <dbReference type="ChEBI" id="CHEBI:59789"/>
    </ligand>
</feature>
<feature type="binding site" evidence="1">
    <location>
        <position position="76"/>
    </location>
    <ligand>
        <name>S-adenosyl-L-methionine</name>
        <dbReference type="ChEBI" id="CHEBI:59789"/>
    </ligand>
</feature>
<feature type="binding site" evidence="1">
    <location>
        <position position="120"/>
    </location>
    <ligand>
        <name>S-adenosyl-L-methionine</name>
        <dbReference type="ChEBI" id="CHEBI:59789"/>
    </ligand>
</feature>
<reference key="1">
    <citation type="journal article" date="2006" name="Genome Biol.">
        <title>Genomic analysis reveals that Pseudomonas aeruginosa virulence is combinatorial.</title>
        <authorList>
            <person name="Lee D.G."/>
            <person name="Urbach J.M."/>
            <person name="Wu G."/>
            <person name="Liberati N.T."/>
            <person name="Feinbaum R.L."/>
            <person name="Miyata S."/>
            <person name="Diggins L.T."/>
            <person name="He J."/>
            <person name="Saucier M."/>
            <person name="Deziel E."/>
            <person name="Friedman L."/>
            <person name="Li L."/>
            <person name="Grills G."/>
            <person name="Montgomery K."/>
            <person name="Kucherlapati R."/>
            <person name="Rahme L.G."/>
            <person name="Ausubel F.M."/>
        </authorList>
    </citation>
    <scope>NUCLEOTIDE SEQUENCE [LARGE SCALE GENOMIC DNA]</scope>
    <source>
        <strain>UCBPP-PA14</strain>
    </source>
</reference>
<organism>
    <name type="scientific">Pseudomonas aeruginosa (strain UCBPP-PA14)</name>
    <dbReference type="NCBI Taxonomy" id="208963"/>
    <lineage>
        <taxon>Bacteria</taxon>
        <taxon>Pseudomonadati</taxon>
        <taxon>Pseudomonadota</taxon>
        <taxon>Gammaproteobacteria</taxon>
        <taxon>Pseudomonadales</taxon>
        <taxon>Pseudomonadaceae</taxon>
        <taxon>Pseudomonas</taxon>
    </lineage>
</organism>
<gene>
    <name evidence="1" type="primary">ubiG</name>
    <name type="ordered locus">PA14_23220</name>
</gene>
<accession>Q02PX7</accession>
<sequence>MSNVDHAEIAKFEALAHRWWDRESEFKPLHDINPLRVNWIDERAGLAGKKVLDIGCGGGILSEAMAQRGANVTGIDMGEAPLAVARLHQLESGVAVDYRQITAEQMAEEMPGQFDVVTCLEMLEHVPDPASVIRACHRLVKPGGQVFLSTINRNPKAYLFAVIGAEYILQLLPRGTHDFRKFIRPSELGAWSREAGLEVKDIIGLTYNPLTKHYKLANDVDVNYMVQTQREA</sequence>
<protein>
    <recommendedName>
        <fullName evidence="1">Ubiquinone biosynthesis O-methyltransferase</fullName>
    </recommendedName>
    <alternativeName>
        <fullName evidence="1">2-polyprenyl-6-hydroxyphenol methylase</fullName>
        <ecNumber evidence="1">2.1.1.222</ecNumber>
    </alternativeName>
    <alternativeName>
        <fullName evidence="1">3-demethylubiquinone 3-O-methyltransferase</fullName>
        <ecNumber evidence="1">2.1.1.64</ecNumber>
    </alternativeName>
</protein>
<name>UBIG_PSEAB</name>
<comment type="function">
    <text evidence="1">O-methyltransferase that catalyzes the 2 O-methylation steps in the ubiquinone biosynthetic pathway.</text>
</comment>
<comment type="catalytic activity">
    <reaction evidence="1">
        <text>a 3-demethylubiquinol + S-adenosyl-L-methionine = a ubiquinol + S-adenosyl-L-homocysteine + H(+)</text>
        <dbReference type="Rhea" id="RHEA:44380"/>
        <dbReference type="Rhea" id="RHEA-COMP:9566"/>
        <dbReference type="Rhea" id="RHEA-COMP:10914"/>
        <dbReference type="ChEBI" id="CHEBI:15378"/>
        <dbReference type="ChEBI" id="CHEBI:17976"/>
        <dbReference type="ChEBI" id="CHEBI:57856"/>
        <dbReference type="ChEBI" id="CHEBI:59789"/>
        <dbReference type="ChEBI" id="CHEBI:84422"/>
        <dbReference type="EC" id="2.1.1.64"/>
    </reaction>
</comment>
<comment type="catalytic activity">
    <reaction evidence="1">
        <text>a 3-(all-trans-polyprenyl)benzene-1,2-diol + S-adenosyl-L-methionine = a 2-methoxy-6-(all-trans-polyprenyl)phenol + S-adenosyl-L-homocysteine + H(+)</text>
        <dbReference type="Rhea" id="RHEA:31411"/>
        <dbReference type="Rhea" id="RHEA-COMP:9550"/>
        <dbReference type="Rhea" id="RHEA-COMP:9551"/>
        <dbReference type="ChEBI" id="CHEBI:15378"/>
        <dbReference type="ChEBI" id="CHEBI:57856"/>
        <dbReference type="ChEBI" id="CHEBI:59789"/>
        <dbReference type="ChEBI" id="CHEBI:62729"/>
        <dbReference type="ChEBI" id="CHEBI:62731"/>
        <dbReference type="EC" id="2.1.1.222"/>
    </reaction>
</comment>
<comment type="pathway">
    <text evidence="1">Cofactor biosynthesis; ubiquinone biosynthesis.</text>
</comment>
<comment type="similarity">
    <text evidence="1">Belongs to the methyltransferase superfamily. UbiG/COQ3 family.</text>
</comment>